<sequence>MSFGRPGFADVFKPSPPARGSFPLDHDGECKAFMISYLKCMKENANDNGKCRLFSKQYLECRMDKGLMARDDMANLGLGDVVDPSALPPASTQTTTAPLSNPPHVPQPPSSEHRI</sequence>
<feature type="chain" id="PRO_0000122287" description="Cytochrome c oxidase assembly protein COX19">
    <location>
        <begin position="1"/>
        <end position="115"/>
    </location>
</feature>
<feature type="domain" description="CHCH" evidence="2">
    <location>
        <begin position="27"/>
        <end position="69"/>
    </location>
</feature>
<feature type="region of interest" description="Disordered" evidence="3">
    <location>
        <begin position="1"/>
        <end position="23"/>
    </location>
</feature>
<feature type="region of interest" description="Disordered" evidence="3">
    <location>
        <begin position="80"/>
        <end position="115"/>
    </location>
</feature>
<feature type="short sequence motif" description="Cx9C motif 1" evidence="2">
    <location>
        <begin position="30"/>
        <end position="40"/>
    </location>
</feature>
<feature type="short sequence motif" description="Cx9C motif 2" evidence="2">
    <location>
        <begin position="51"/>
        <end position="61"/>
    </location>
</feature>
<feature type="compositionally biased region" description="Polar residues" evidence="3">
    <location>
        <begin position="90"/>
        <end position="99"/>
    </location>
</feature>
<feature type="compositionally biased region" description="Pro residues" evidence="3">
    <location>
        <begin position="100"/>
        <end position="109"/>
    </location>
</feature>
<feature type="disulfide bond" evidence="2">
    <location>
        <begin position="30"/>
        <end position="61"/>
    </location>
</feature>
<feature type="disulfide bond" evidence="2">
    <location>
        <begin position="40"/>
        <end position="51"/>
    </location>
</feature>
<accession>P0CM86</accession>
<accession>Q55L07</accession>
<accession>Q5KAH3</accession>
<comment type="function">
    <text evidence="1">Required for the assembly of mitochondrial cytochrome c oxidase.</text>
</comment>
<comment type="subcellular location">
    <subcellularLocation>
        <location evidence="1">Cytoplasm</location>
    </subcellularLocation>
    <subcellularLocation>
        <location evidence="1">Mitochondrion intermembrane space</location>
    </subcellularLocation>
</comment>
<comment type="similarity">
    <text evidence="4">Belongs to the COX19 family.</text>
</comment>
<evidence type="ECO:0000250" key="1"/>
<evidence type="ECO:0000255" key="2">
    <source>
        <dbReference type="PROSITE-ProRule" id="PRU01150"/>
    </source>
</evidence>
<evidence type="ECO:0000256" key="3">
    <source>
        <dbReference type="SAM" id="MobiDB-lite"/>
    </source>
</evidence>
<evidence type="ECO:0000305" key="4"/>
<protein>
    <recommendedName>
        <fullName>Cytochrome c oxidase assembly protein COX19</fullName>
    </recommendedName>
</protein>
<gene>
    <name type="primary">COX19</name>
    <name type="ordered locus">CNJ01690</name>
</gene>
<organism>
    <name type="scientific">Cryptococcus neoformans var. neoformans serotype D (strain JEC21 / ATCC MYA-565)</name>
    <name type="common">Filobasidiella neoformans</name>
    <dbReference type="NCBI Taxonomy" id="214684"/>
    <lineage>
        <taxon>Eukaryota</taxon>
        <taxon>Fungi</taxon>
        <taxon>Dikarya</taxon>
        <taxon>Basidiomycota</taxon>
        <taxon>Agaricomycotina</taxon>
        <taxon>Tremellomycetes</taxon>
        <taxon>Tremellales</taxon>
        <taxon>Cryptococcaceae</taxon>
        <taxon>Cryptococcus</taxon>
        <taxon>Cryptococcus neoformans species complex</taxon>
    </lineage>
</organism>
<dbReference type="EMBL" id="AE017350">
    <property type="protein sequence ID" value="AAW45829.1"/>
    <property type="molecule type" value="Genomic_DNA"/>
</dbReference>
<dbReference type="RefSeq" id="XP_567346.1">
    <property type="nucleotide sequence ID" value="XM_567346.1"/>
</dbReference>
<dbReference type="SMR" id="P0CM86"/>
<dbReference type="FunCoup" id="P0CM86">
    <property type="interactions" value="183"/>
</dbReference>
<dbReference type="STRING" id="214684.P0CM86"/>
<dbReference type="PaxDb" id="214684-P0CM86"/>
<dbReference type="EnsemblFungi" id="AAW45829">
    <property type="protein sequence ID" value="AAW45829"/>
    <property type="gene ID" value="CNJ01690"/>
</dbReference>
<dbReference type="GeneID" id="3254083"/>
<dbReference type="KEGG" id="cne:CNJ01690"/>
<dbReference type="VEuPathDB" id="FungiDB:CNJ01690"/>
<dbReference type="eggNOG" id="KOG3477">
    <property type="taxonomic scope" value="Eukaryota"/>
</dbReference>
<dbReference type="HOGENOM" id="CLU_141947_2_0_1"/>
<dbReference type="InParanoid" id="P0CM86"/>
<dbReference type="OMA" id="GTNDEAC"/>
<dbReference type="OrthoDB" id="268594at2759"/>
<dbReference type="Proteomes" id="UP000002149">
    <property type="component" value="Chromosome 10"/>
</dbReference>
<dbReference type="GO" id="GO:0005758">
    <property type="term" value="C:mitochondrial intermembrane space"/>
    <property type="evidence" value="ECO:0000318"/>
    <property type="project" value="GO_Central"/>
</dbReference>
<dbReference type="GO" id="GO:0033617">
    <property type="term" value="P:mitochondrial cytochrome c oxidase assembly"/>
    <property type="evidence" value="ECO:0000318"/>
    <property type="project" value="GO_Central"/>
</dbReference>
<dbReference type="InterPro" id="IPR010625">
    <property type="entry name" value="CHCH"/>
</dbReference>
<dbReference type="InterPro" id="IPR051383">
    <property type="entry name" value="COX19"/>
</dbReference>
<dbReference type="InterPro" id="IPR009069">
    <property type="entry name" value="Cys_alpha_HP_mot_SF"/>
</dbReference>
<dbReference type="PANTHER" id="PTHR21107">
    <property type="entry name" value="CYTOCHROME C OXIDASE ASSEMBLY PROTEIN COX19"/>
    <property type="match status" value="1"/>
</dbReference>
<dbReference type="PANTHER" id="PTHR21107:SF2">
    <property type="entry name" value="CYTOCHROME C OXIDASE ASSEMBLY PROTEIN COX19"/>
    <property type="match status" value="1"/>
</dbReference>
<dbReference type="Pfam" id="PF06747">
    <property type="entry name" value="CHCH"/>
    <property type="match status" value="1"/>
</dbReference>
<dbReference type="SUPFAM" id="SSF47072">
    <property type="entry name" value="Cysteine alpha-hairpin motif"/>
    <property type="match status" value="1"/>
</dbReference>
<dbReference type="PROSITE" id="PS51808">
    <property type="entry name" value="CHCH"/>
    <property type="match status" value="1"/>
</dbReference>
<proteinExistence type="inferred from homology"/>
<reference key="1">
    <citation type="journal article" date="2005" name="Science">
        <title>The genome of the basidiomycetous yeast and human pathogen Cryptococcus neoformans.</title>
        <authorList>
            <person name="Loftus B.J."/>
            <person name="Fung E."/>
            <person name="Roncaglia P."/>
            <person name="Rowley D."/>
            <person name="Amedeo P."/>
            <person name="Bruno D."/>
            <person name="Vamathevan J."/>
            <person name="Miranda M."/>
            <person name="Anderson I.J."/>
            <person name="Fraser J.A."/>
            <person name="Allen J.E."/>
            <person name="Bosdet I.E."/>
            <person name="Brent M.R."/>
            <person name="Chiu R."/>
            <person name="Doering T.L."/>
            <person name="Donlin M.J."/>
            <person name="D'Souza C.A."/>
            <person name="Fox D.S."/>
            <person name="Grinberg V."/>
            <person name="Fu J."/>
            <person name="Fukushima M."/>
            <person name="Haas B.J."/>
            <person name="Huang J.C."/>
            <person name="Janbon G."/>
            <person name="Jones S.J.M."/>
            <person name="Koo H.L."/>
            <person name="Krzywinski M.I."/>
            <person name="Kwon-Chung K.J."/>
            <person name="Lengeler K.B."/>
            <person name="Maiti R."/>
            <person name="Marra M.A."/>
            <person name="Marra R.E."/>
            <person name="Mathewson C.A."/>
            <person name="Mitchell T.G."/>
            <person name="Pertea M."/>
            <person name="Riggs F.R."/>
            <person name="Salzberg S.L."/>
            <person name="Schein J.E."/>
            <person name="Shvartsbeyn A."/>
            <person name="Shin H."/>
            <person name="Shumway M."/>
            <person name="Specht C.A."/>
            <person name="Suh B.B."/>
            <person name="Tenney A."/>
            <person name="Utterback T.R."/>
            <person name="Wickes B.L."/>
            <person name="Wortman J.R."/>
            <person name="Wye N.H."/>
            <person name="Kronstad J.W."/>
            <person name="Lodge J.K."/>
            <person name="Heitman J."/>
            <person name="Davis R.W."/>
            <person name="Fraser C.M."/>
            <person name="Hyman R.W."/>
        </authorList>
    </citation>
    <scope>NUCLEOTIDE SEQUENCE [LARGE SCALE GENOMIC DNA]</scope>
    <source>
        <strain>JEC21 / ATCC MYA-565</strain>
    </source>
</reference>
<name>COX19_CRYNJ</name>
<keyword id="KW-0963">Cytoplasm</keyword>
<keyword id="KW-1015">Disulfide bond</keyword>
<keyword id="KW-0496">Mitochondrion</keyword>
<keyword id="KW-1185">Reference proteome</keyword>